<name>FIBA_MUNMU</name>
<evidence type="ECO:0000250" key="1">
    <source>
        <dbReference type="UniProtKB" id="E9PV24"/>
    </source>
</evidence>
<evidence type="ECO:0000250" key="2">
    <source>
        <dbReference type="UniProtKB" id="P02671"/>
    </source>
</evidence>
<proteinExistence type="evidence at protein level"/>
<dbReference type="GO" id="GO:0005576">
    <property type="term" value="C:extracellular region"/>
    <property type="evidence" value="ECO:0007669"/>
    <property type="project" value="UniProtKB-SubCell"/>
</dbReference>
<dbReference type="GO" id="GO:0002250">
    <property type="term" value="P:adaptive immune response"/>
    <property type="evidence" value="ECO:0007669"/>
    <property type="project" value="UniProtKB-KW"/>
</dbReference>
<dbReference type="GO" id="GO:0007596">
    <property type="term" value="P:blood coagulation"/>
    <property type="evidence" value="ECO:0007669"/>
    <property type="project" value="UniProtKB-KW"/>
</dbReference>
<dbReference type="GO" id="GO:0045087">
    <property type="term" value="P:innate immune response"/>
    <property type="evidence" value="ECO:0007669"/>
    <property type="project" value="UniProtKB-KW"/>
</dbReference>
<protein>
    <recommendedName>
        <fullName>Fibrinogen alpha chain</fullName>
    </recommendedName>
    <component>
        <recommendedName>
            <fullName>Fibrinopeptide A</fullName>
        </recommendedName>
    </component>
</protein>
<sequence length="19" mass="1822">ADGSDPASGEFLTEGGGVR</sequence>
<comment type="function">
    <text evidence="1">Cleaved by the protease thrombin to yield monomers which, together with fibrinogen beta (FGB) and fibrinogen gamma (FGG), polymerize to form an insoluble fibrin matrix. Fibrin has a major function in hemostasis as one of the primary components of blood clots. In addition, functions during the early stages of wound repair to stabilize the lesion and guide cell migration during re-epithelialization. Was originally thought to be essential for platelet aggregation, based on in vitro studies using anticoagulated blood. However, subsequent studies have shown that it is not absolutely required for thrombus formation in vivo. Enhances expression of SELP in activated platelets via an ITGB3-dependent pathway. Maternal fibrinogen is essential for successful pregnancy. Fibrin deposition is also associated with infection, where it protects against IFNG-mediated hemorrhage. May also facilitate the immune response via both innate and T-cell mediated pathways.</text>
</comment>
<comment type="subunit">
    <text evidence="2">Heterohexamer; disulfide linked. Contains 2 sets of 3 non-identical chains (alpha, beta and gamma). The 2 heterotrimers are in head to head conformation with the N-termini in a small central domain (By similarity).</text>
</comment>
<comment type="subcellular location">
    <subcellularLocation>
        <location>Secreted</location>
    </subcellularLocation>
</comment>
<comment type="domain">
    <text evidence="2">A long coiled coil structure formed by 3 polypeptide chains connects the central nodule to the C-terminal domains (distal nodules). The long C-terminal ends of the alpha chains fold back, contributing a fourth strand to the coiled coil structure.</text>
</comment>
<comment type="PTM">
    <text>Conversion of fibrinogen to fibrin is triggered by thrombin, which cleaves fibrinopeptides A and B from alpha and beta chains, and thus exposes the N-terminal polymerization sites responsible for the formation of the soft clot. The soft clot is converted into the hard clot by factor XIIIA which catalyzes the epsilon-(gamma-glutamyl)lysine cross-linking between gamma chains (stronger) and between alpha chains (weaker) of different monomers.</text>
</comment>
<comment type="PTM">
    <text>Forms F13A-mediated cross-links between a glutamine and the epsilon-amino group of a lysine residue, forming fibronectin-fibrinogen heteropolymers.</text>
</comment>
<keyword id="KW-1064">Adaptive immunity</keyword>
<keyword id="KW-0094">Blood coagulation</keyword>
<keyword id="KW-0175">Coiled coil</keyword>
<keyword id="KW-0903">Direct protein sequencing</keyword>
<keyword id="KW-1015">Disulfide bond</keyword>
<keyword id="KW-0356">Hemostasis</keyword>
<keyword id="KW-0391">Immunity</keyword>
<keyword id="KW-0399">Innate immunity</keyword>
<keyword id="KW-0964">Secreted</keyword>
<feature type="peptide" id="PRO_0000009031" description="Fibrinopeptide A">
    <location>
        <begin position="1"/>
        <end position="19"/>
    </location>
</feature>
<feature type="non-terminal residue">
    <location>
        <position position="19"/>
    </location>
</feature>
<accession>P14457</accession>
<gene>
    <name type="primary">FGA</name>
</gene>
<organism>
    <name type="scientific">Muntiacus muntjak</name>
    <name type="common">Barking deer</name>
    <name type="synonym">Indian muntjac</name>
    <dbReference type="NCBI Taxonomy" id="9888"/>
    <lineage>
        <taxon>Eukaryota</taxon>
        <taxon>Metazoa</taxon>
        <taxon>Chordata</taxon>
        <taxon>Craniata</taxon>
        <taxon>Vertebrata</taxon>
        <taxon>Euteleostomi</taxon>
        <taxon>Mammalia</taxon>
        <taxon>Eutheria</taxon>
        <taxon>Laurasiatheria</taxon>
        <taxon>Artiodactyla</taxon>
        <taxon>Ruminantia</taxon>
        <taxon>Pecora</taxon>
        <taxon>Cervidae</taxon>
        <taxon>Muntiacinae</taxon>
        <taxon>Muntiacus</taxon>
    </lineage>
</organism>
<reference key="1">
    <citation type="journal article" date="1967" name="Arch. Biochem. Biophys.">
        <title>Amino acid sequence studies on artiodacty fibrinopeptides.</title>
        <authorList>
            <person name="Mross G.A."/>
            <person name="Doolittle R.F."/>
        </authorList>
    </citation>
    <scope>PROTEIN SEQUENCE</scope>
</reference>